<accession>Q7VAN8</accession>
<keyword id="KW-0067">ATP-binding</keyword>
<keyword id="KW-0436">Ligase</keyword>
<keyword id="KW-0547">Nucleotide-binding</keyword>
<keyword id="KW-0658">Purine biosynthesis</keyword>
<keyword id="KW-1185">Reference proteome</keyword>
<dbReference type="EC" id="6.3.2.6" evidence="1"/>
<dbReference type="EMBL" id="AE017126">
    <property type="protein sequence ID" value="AAQ00464.1"/>
    <property type="molecule type" value="Genomic_DNA"/>
</dbReference>
<dbReference type="RefSeq" id="NP_875811.1">
    <property type="nucleotide sequence ID" value="NC_005042.1"/>
</dbReference>
<dbReference type="RefSeq" id="WP_011125571.1">
    <property type="nucleotide sequence ID" value="NC_005042.1"/>
</dbReference>
<dbReference type="SMR" id="Q7VAN8"/>
<dbReference type="STRING" id="167539.Pro_1420"/>
<dbReference type="EnsemblBacteria" id="AAQ00464">
    <property type="protein sequence ID" value="AAQ00464"/>
    <property type="gene ID" value="Pro_1420"/>
</dbReference>
<dbReference type="KEGG" id="pma:Pro_1420"/>
<dbReference type="PATRIC" id="fig|167539.5.peg.1486"/>
<dbReference type="eggNOG" id="COG0152">
    <property type="taxonomic scope" value="Bacteria"/>
</dbReference>
<dbReference type="HOGENOM" id="CLU_061495_2_0_3"/>
<dbReference type="OrthoDB" id="9801549at2"/>
<dbReference type="UniPathway" id="UPA00074">
    <property type="reaction ID" value="UER00131"/>
</dbReference>
<dbReference type="Proteomes" id="UP000001420">
    <property type="component" value="Chromosome"/>
</dbReference>
<dbReference type="GO" id="GO:0005524">
    <property type="term" value="F:ATP binding"/>
    <property type="evidence" value="ECO:0007669"/>
    <property type="project" value="UniProtKB-KW"/>
</dbReference>
<dbReference type="GO" id="GO:0004639">
    <property type="term" value="F:phosphoribosylaminoimidazolesuccinocarboxamide synthase activity"/>
    <property type="evidence" value="ECO:0007669"/>
    <property type="project" value="UniProtKB-UniRule"/>
</dbReference>
<dbReference type="GO" id="GO:0006189">
    <property type="term" value="P:'de novo' IMP biosynthetic process"/>
    <property type="evidence" value="ECO:0007669"/>
    <property type="project" value="UniProtKB-UniRule"/>
</dbReference>
<dbReference type="GO" id="GO:0009236">
    <property type="term" value="P:cobalamin biosynthetic process"/>
    <property type="evidence" value="ECO:0007669"/>
    <property type="project" value="InterPro"/>
</dbReference>
<dbReference type="CDD" id="cd01415">
    <property type="entry name" value="SAICAR_synt_PurC"/>
    <property type="match status" value="1"/>
</dbReference>
<dbReference type="Gene3D" id="3.30.470.20">
    <property type="entry name" value="ATP-grasp fold, B domain"/>
    <property type="match status" value="1"/>
</dbReference>
<dbReference type="Gene3D" id="3.30.200.20">
    <property type="entry name" value="Phosphorylase Kinase, domain 1"/>
    <property type="match status" value="1"/>
</dbReference>
<dbReference type="HAMAP" id="MF_00137">
    <property type="entry name" value="SAICAR_synth"/>
    <property type="match status" value="1"/>
</dbReference>
<dbReference type="InterPro" id="IPR028923">
    <property type="entry name" value="SAICAR_synt/ADE2_N"/>
</dbReference>
<dbReference type="InterPro" id="IPR033934">
    <property type="entry name" value="SAICAR_synt_PurC"/>
</dbReference>
<dbReference type="InterPro" id="IPR001636">
    <property type="entry name" value="SAICAR_synth"/>
</dbReference>
<dbReference type="InterPro" id="IPR050089">
    <property type="entry name" value="SAICAR_synthetase"/>
</dbReference>
<dbReference type="InterPro" id="IPR018236">
    <property type="entry name" value="SAICAR_synthetase_CS"/>
</dbReference>
<dbReference type="NCBIfam" id="TIGR00081">
    <property type="entry name" value="purC"/>
    <property type="match status" value="1"/>
</dbReference>
<dbReference type="PANTHER" id="PTHR43599">
    <property type="entry name" value="MULTIFUNCTIONAL PROTEIN ADE2"/>
    <property type="match status" value="1"/>
</dbReference>
<dbReference type="PANTHER" id="PTHR43599:SF3">
    <property type="entry name" value="SI:DKEY-6E2.2"/>
    <property type="match status" value="1"/>
</dbReference>
<dbReference type="Pfam" id="PF01259">
    <property type="entry name" value="SAICAR_synt"/>
    <property type="match status" value="1"/>
</dbReference>
<dbReference type="SUPFAM" id="SSF56104">
    <property type="entry name" value="SAICAR synthase-like"/>
    <property type="match status" value="1"/>
</dbReference>
<dbReference type="PROSITE" id="PS01057">
    <property type="entry name" value="SAICAR_SYNTHETASE_1"/>
    <property type="match status" value="1"/>
</dbReference>
<name>PUR7_PROMA</name>
<feature type="chain" id="PRO_0000100852" description="Phosphoribosylaminoimidazole-succinocarboxamide synthase">
    <location>
        <begin position="1"/>
        <end position="244"/>
    </location>
</feature>
<protein>
    <recommendedName>
        <fullName evidence="1">Phosphoribosylaminoimidazole-succinocarboxamide synthase</fullName>
        <ecNumber evidence="1">6.3.2.6</ecNumber>
    </recommendedName>
    <alternativeName>
        <fullName evidence="1">SAICAR synthetase</fullName>
    </alternativeName>
</protein>
<evidence type="ECO:0000255" key="1">
    <source>
        <dbReference type="HAMAP-Rule" id="MF_00137"/>
    </source>
</evidence>
<proteinExistence type="inferred from homology"/>
<organism>
    <name type="scientific">Prochlorococcus marinus (strain SARG / CCMP1375 / SS120)</name>
    <dbReference type="NCBI Taxonomy" id="167539"/>
    <lineage>
        <taxon>Bacteria</taxon>
        <taxon>Bacillati</taxon>
        <taxon>Cyanobacteriota</taxon>
        <taxon>Cyanophyceae</taxon>
        <taxon>Synechococcales</taxon>
        <taxon>Prochlorococcaceae</taxon>
        <taxon>Prochlorococcus</taxon>
    </lineage>
</organism>
<sequence>MAPNHGALLYEGKAKRVYYTDNSDEFLVHFKNDATAFNAKKHAQLEGKGSLNCEISTEIFKLLERNGIATHFLNLEDDCWMLVQRVDVIPIEIVIRNIASGSLCKQTPIAPGTELSRPLMDLYLKDDVLEDPLLTEERIDLLNLLSSSQRKEIQRLSLRVNDCLKEFMKGLDLLLVDFKLEMGFNGSGQLLIADEISPDSCRIWDLKTNDQDDRILDKDRFRKDLGGVLEGYSEILRRIKAFNS</sequence>
<reference key="1">
    <citation type="journal article" date="2003" name="Proc. Natl. Acad. Sci. U.S.A.">
        <title>Genome sequence of the cyanobacterium Prochlorococcus marinus SS120, a nearly minimal oxyphototrophic genome.</title>
        <authorList>
            <person name="Dufresne A."/>
            <person name="Salanoubat M."/>
            <person name="Partensky F."/>
            <person name="Artiguenave F."/>
            <person name="Axmann I.M."/>
            <person name="Barbe V."/>
            <person name="Duprat S."/>
            <person name="Galperin M.Y."/>
            <person name="Koonin E.V."/>
            <person name="Le Gall F."/>
            <person name="Makarova K.S."/>
            <person name="Ostrowski M."/>
            <person name="Oztas S."/>
            <person name="Robert C."/>
            <person name="Rogozin I.B."/>
            <person name="Scanlan D.J."/>
            <person name="Tandeau de Marsac N."/>
            <person name="Weissenbach J."/>
            <person name="Wincker P."/>
            <person name="Wolf Y.I."/>
            <person name="Hess W.R."/>
        </authorList>
    </citation>
    <scope>NUCLEOTIDE SEQUENCE [LARGE SCALE GENOMIC DNA]</scope>
    <source>
        <strain>SARG / CCMP1375 / SS120</strain>
    </source>
</reference>
<gene>
    <name evidence="1" type="primary">purC</name>
    <name type="ordered locus">Pro_1420</name>
</gene>
<comment type="catalytic activity">
    <reaction evidence="1">
        <text>5-amino-1-(5-phospho-D-ribosyl)imidazole-4-carboxylate + L-aspartate + ATP = (2S)-2-[5-amino-1-(5-phospho-beta-D-ribosyl)imidazole-4-carboxamido]succinate + ADP + phosphate + 2 H(+)</text>
        <dbReference type="Rhea" id="RHEA:22628"/>
        <dbReference type="ChEBI" id="CHEBI:15378"/>
        <dbReference type="ChEBI" id="CHEBI:29991"/>
        <dbReference type="ChEBI" id="CHEBI:30616"/>
        <dbReference type="ChEBI" id="CHEBI:43474"/>
        <dbReference type="ChEBI" id="CHEBI:58443"/>
        <dbReference type="ChEBI" id="CHEBI:77657"/>
        <dbReference type="ChEBI" id="CHEBI:456216"/>
        <dbReference type="EC" id="6.3.2.6"/>
    </reaction>
</comment>
<comment type="pathway">
    <text evidence="1">Purine metabolism; IMP biosynthesis via de novo pathway; 5-amino-1-(5-phospho-D-ribosyl)imidazole-4-carboxamide from 5-amino-1-(5-phospho-D-ribosyl)imidazole-4-carboxylate: step 1/2.</text>
</comment>
<comment type="similarity">
    <text evidence="1">Belongs to the SAICAR synthetase family.</text>
</comment>